<comment type="function">
    <text evidence="4">Neurotoxin active on both insects and mammals.</text>
</comment>
<comment type="subunit">
    <text>Monomer.</text>
</comment>
<comment type="subcellular location">
    <subcellularLocation>
        <location>Secreted</location>
    </subcellularLocation>
</comment>
<comment type="tissue specificity">
    <text>Expressed by the venom gland.</text>
</comment>
<comment type="mass spectrometry"/>
<comment type="toxic dose">
    <text evidence="4">LD(50) is 1.41 mg/kg by intracerebroventricular injection into mice.</text>
</comment>
<comment type="toxic dose">
    <text evidence="4">PD(50) is 16 mg/kg in cockroaches.</text>
</comment>
<comment type="similarity">
    <text evidence="5">Belongs to the neurotoxin 12 (Hwtx-2) family. 02 (Hwtx-2) subfamily.</text>
</comment>
<name>H2A16_CYRHA</name>
<proteinExistence type="evidence at protein level"/>
<protein>
    <recommendedName>
        <fullName>U4-theraphotoxin-Hhn1a</fullName>
        <shortName>U4-TRTX-Hhn1a</shortName>
    </recommendedName>
    <alternativeName>
        <fullName>Hainantoxin-II.16</fullName>
        <shortName>HNTX-II.16</shortName>
    </alternativeName>
    <alternativeName>
        <fullName>Peptide F8-20.15</fullName>
    </alternativeName>
</protein>
<sequence>MKVTLIAILTCAAVLVLHTTAAEELEAESQLMEVGMPDTELEAVDEERLFECSVSCEIEKEGNKDCKKKKCKGGWKCKFNMCVKV</sequence>
<evidence type="ECO:0000250" key="1"/>
<evidence type="ECO:0000255" key="2"/>
<evidence type="ECO:0000269" key="3">
    <source>
    </source>
</evidence>
<evidence type="ECO:0000269" key="4">
    <source>
    </source>
</evidence>
<evidence type="ECO:0000305" key="5"/>
<dbReference type="EMBL" id="GU293066">
    <property type="protein sequence ID" value="ADB56882.1"/>
    <property type="molecule type" value="Genomic_DNA"/>
</dbReference>
<dbReference type="SMR" id="D2Y2I9"/>
<dbReference type="ArachnoServer" id="AS001783">
    <property type="toxin name" value="U4-theraphotoxin-Hhn1a"/>
</dbReference>
<dbReference type="GO" id="GO:0005576">
    <property type="term" value="C:extracellular region"/>
    <property type="evidence" value="ECO:0007669"/>
    <property type="project" value="UniProtKB-SubCell"/>
</dbReference>
<dbReference type="GO" id="GO:0035792">
    <property type="term" value="C:host cell postsynaptic membrane"/>
    <property type="evidence" value="ECO:0007669"/>
    <property type="project" value="UniProtKB-KW"/>
</dbReference>
<dbReference type="GO" id="GO:0090729">
    <property type="term" value="F:toxin activity"/>
    <property type="evidence" value="ECO:0007669"/>
    <property type="project" value="UniProtKB-KW"/>
</dbReference>
<dbReference type="InterPro" id="IPR012625">
    <property type="entry name" value="Hwtx-2-like"/>
</dbReference>
<dbReference type="Pfam" id="PF08089">
    <property type="entry name" value="Toxin_20"/>
    <property type="match status" value="1"/>
</dbReference>
<dbReference type="SUPFAM" id="SSF57059">
    <property type="entry name" value="omega toxin-like"/>
    <property type="match status" value="1"/>
</dbReference>
<dbReference type="PROSITE" id="PS60022">
    <property type="entry name" value="HWTX_2"/>
    <property type="match status" value="1"/>
</dbReference>
<keyword id="KW-0903">Direct protein sequencing</keyword>
<keyword id="KW-1015">Disulfide bond</keyword>
<keyword id="KW-0528">Neurotoxin</keyword>
<keyword id="KW-0629">Postsynaptic neurotoxin</keyword>
<keyword id="KW-0964">Secreted</keyword>
<keyword id="KW-0732">Signal</keyword>
<keyword id="KW-0800">Toxin</keyword>
<feature type="signal peptide" evidence="2">
    <location>
        <begin position="1"/>
        <end position="22"/>
    </location>
</feature>
<feature type="propeptide" id="PRO_0000400747" evidence="3 4">
    <location>
        <begin position="23"/>
        <end position="48"/>
    </location>
</feature>
<feature type="peptide" id="PRO_0000400748" description="U4-theraphotoxin-Hhn1a">
    <location>
        <begin position="49"/>
        <end position="85"/>
    </location>
</feature>
<feature type="disulfide bond" evidence="1">
    <location>
        <begin position="52"/>
        <end position="66"/>
    </location>
</feature>
<feature type="disulfide bond" evidence="1">
    <location>
        <begin position="56"/>
        <end position="77"/>
    </location>
</feature>
<feature type="disulfide bond" evidence="1">
    <location>
        <begin position="71"/>
        <end position="82"/>
    </location>
</feature>
<reference key="1">
    <citation type="journal article" date="2010" name="J. Proteome Res.">
        <title>Molecular diversification of peptide toxins from the tarantula Haplopelma hainanum (Ornithoctonus hainana) venom based on transcriptomic, peptidomic, and genomic analyses.</title>
        <authorList>
            <person name="Tang X."/>
            <person name="Zhang Y."/>
            <person name="Hu W."/>
            <person name="Xu D."/>
            <person name="Tao H."/>
            <person name="Yang X."/>
            <person name="Li Y."/>
            <person name="Jiang L."/>
            <person name="Liang S."/>
        </authorList>
    </citation>
    <scope>NUCLEOTIDE SEQUENCE [LARGE SCALE GENOMIC DNA]</scope>
    <scope>PROTEIN SEQUENCE OF 49-85</scope>
    <scope>IDENTIFICATION BY MASS SPECTROMETRY</scope>
    <source>
        <tissue>Venom</tissue>
        <tissue>Venom gland</tissue>
    </source>
</reference>
<reference key="2">
    <citation type="journal article" date="2010" name="Dong Wu Xue Yan Jiu">
        <title>Isolation and characterization of Hainantoxin-II, a new neurotoxic peptide from the Chinese bird spider (Haplopelma hainanum).</title>
        <authorList>
            <person name="Pan J.Y."/>
            <person name="Yu Z.Q."/>
        </authorList>
    </citation>
    <scope>PROTEIN SEQUENCE OF 49-85</scope>
    <scope>FUNCTION</scope>
    <scope>MASS SPECTROMETRY</scope>
    <scope>TOXIC DOSE</scope>
    <source>
        <tissue>Venom</tissue>
    </source>
</reference>
<accession>D2Y2I9</accession>
<organism>
    <name type="scientific">Cyriopagopus hainanus</name>
    <name type="common">Chinese bird spider</name>
    <name type="synonym">Haplopelma hainanum</name>
    <dbReference type="NCBI Taxonomy" id="209901"/>
    <lineage>
        <taxon>Eukaryota</taxon>
        <taxon>Metazoa</taxon>
        <taxon>Ecdysozoa</taxon>
        <taxon>Arthropoda</taxon>
        <taxon>Chelicerata</taxon>
        <taxon>Arachnida</taxon>
        <taxon>Araneae</taxon>
        <taxon>Mygalomorphae</taxon>
        <taxon>Theraphosidae</taxon>
        <taxon>Haplopelma</taxon>
    </lineage>
</organism>